<evidence type="ECO:0000250" key="1">
    <source>
        <dbReference type="UniProtKB" id="B4F795"/>
    </source>
</evidence>
<evidence type="ECO:0000255" key="2"/>
<evidence type="ECO:0000269" key="3">
    <source>
    </source>
</evidence>
<evidence type="ECO:0000269" key="4">
    <source>
    </source>
</evidence>
<evidence type="ECO:0000269" key="5">
    <source>
    </source>
</evidence>
<evidence type="ECO:0000269" key="6">
    <source>
    </source>
</evidence>
<evidence type="ECO:0000269" key="7">
    <source>
    </source>
</evidence>
<evidence type="ECO:0000269" key="8">
    <source>
    </source>
</evidence>
<evidence type="ECO:0000269" key="9">
    <source>
    </source>
</evidence>
<evidence type="ECO:0000269" key="10">
    <source>
    </source>
</evidence>
<evidence type="ECO:0000269" key="11">
    <source>
    </source>
</evidence>
<evidence type="ECO:0000269" key="12">
    <source>
    </source>
</evidence>
<evidence type="ECO:0000269" key="13">
    <source>
    </source>
</evidence>
<evidence type="ECO:0000269" key="14">
    <source ref="6"/>
</evidence>
<evidence type="ECO:0000303" key="15">
    <source>
    </source>
</evidence>
<evidence type="ECO:0000303" key="16">
    <source>
    </source>
</evidence>
<evidence type="ECO:0000303" key="17">
    <source ref="10"/>
</evidence>
<evidence type="ECO:0000305" key="18"/>
<evidence type="ECO:0000305" key="19">
    <source>
    </source>
</evidence>
<evidence type="ECO:0000312" key="20">
    <source>
        <dbReference type="HGNC" id="HGNC:17292"/>
    </source>
</evidence>
<evidence type="ECO:0007744" key="21">
    <source>
    </source>
</evidence>
<dbReference type="EMBL" id="AJ245621">
    <property type="protein sequence ID" value="CAB75542.1"/>
    <property type="molecule type" value="Genomic_DNA"/>
</dbReference>
<dbReference type="EMBL" id="FN668568">
    <property type="protein sequence ID" value="CBJ93592.1"/>
    <property type="molecule type" value="mRNA"/>
</dbReference>
<dbReference type="EMBL" id="AK027519">
    <property type="protein sequence ID" value="BAG51335.1"/>
    <property type="molecule type" value="mRNA"/>
</dbReference>
<dbReference type="EMBL" id="AK294118">
    <property type="protein sequence ID" value="BAG57451.1"/>
    <property type="molecule type" value="mRNA"/>
</dbReference>
<dbReference type="EMBL" id="AK314582">
    <property type="protein sequence ID" value="BAG37158.1"/>
    <property type="molecule type" value="mRNA"/>
</dbReference>
<dbReference type="EMBL" id="AC011475">
    <property type="status" value="NOT_ANNOTATED_CDS"/>
    <property type="molecule type" value="Genomic_DNA"/>
</dbReference>
<dbReference type="EMBL" id="CH471106">
    <property type="protein sequence ID" value="EAW84126.1"/>
    <property type="molecule type" value="Genomic_DNA"/>
</dbReference>
<dbReference type="EMBL" id="BC010617">
    <property type="protein sequence ID" value="AAH10617.1"/>
    <property type="molecule type" value="mRNA"/>
</dbReference>
<dbReference type="EMBL" id="BC040556">
    <property type="protein sequence ID" value="AAH40556.1"/>
    <property type="molecule type" value="mRNA"/>
</dbReference>
<dbReference type="EMBL" id="AL832517">
    <property type="protein sequence ID" value="CAH56352.1"/>
    <property type="molecule type" value="mRNA"/>
</dbReference>
<dbReference type="EMBL" id="AL832978">
    <property type="protein sequence ID" value="CAH56342.1"/>
    <property type="molecule type" value="mRNA"/>
</dbReference>
<dbReference type="EMBL" id="AK075512">
    <property type="protein sequence ID" value="BAC11662.1"/>
    <property type="status" value="ALT_INIT"/>
    <property type="molecule type" value="mRNA"/>
</dbReference>
<dbReference type="EMBL" id="AF070636">
    <property type="status" value="NOT_ANNOTATED_CDS"/>
    <property type="molecule type" value="mRNA"/>
</dbReference>
<dbReference type="CCDS" id="CCDS12245.1">
    <molecule id="Q8IWA5-1"/>
</dbReference>
<dbReference type="CCDS" id="CCDS54216.1">
    <molecule id="Q8IWA5-3"/>
</dbReference>
<dbReference type="CCDS" id="CCDS86700.1">
    <molecule id="Q8IWA5-2"/>
</dbReference>
<dbReference type="RefSeq" id="NP_001138528.1">
    <molecule id="Q8IWA5-3"/>
    <property type="nucleotide sequence ID" value="NM_001145056.2"/>
</dbReference>
<dbReference type="RefSeq" id="NP_001350540.1">
    <molecule id="Q8IWA5-2"/>
    <property type="nucleotide sequence ID" value="NM_001363611.2"/>
</dbReference>
<dbReference type="RefSeq" id="NP_065161.3">
    <molecule id="Q8IWA5-1"/>
    <property type="nucleotide sequence ID" value="NM_020428.3"/>
</dbReference>
<dbReference type="RefSeq" id="XP_005260054.1">
    <property type="nucleotide sequence ID" value="XM_005259997.1"/>
</dbReference>
<dbReference type="RefSeq" id="XP_047295068.1">
    <molecule id="Q8IWA5-2"/>
    <property type="nucleotide sequence ID" value="XM_047439112.1"/>
</dbReference>
<dbReference type="SMR" id="Q8IWA5"/>
<dbReference type="BioGRID" id="121410">
    <property type="interactions" value="16"/>
</dbReference>
<dbReference type="FunCoup" id="Q8IWA5">
    <property type="interactions" value="1196"/>
</dbReference>
<dbReference type="IntAct" id="Q8IWA5">
    <property type="interactions" value="14"/>
</dbReference>
<dbReference type="MINT" id="Q8IWA5"/>
<dbReference type="STRING" id="9606.ENSP00000466664"/>
<dbReference type="DrugBank" id="DB00122">
    <property type="generic name" value="Choline"/>
</dbReference>
<dbReference type="TCDB" id="2.A.92.1.4">
    <property type="family name" value="the choline transporter-like (ctl) family"/>
</dbReference>
<dbReference type="GlyConnect" id="1111">
    <property type="glycosylation" value="12 N-Linked glycans (2 sites)"/>
</dbReference>
<dbReference type="GlyCosmos" id="Q8IWA5">
    <property type="glycosylation" value="3 sites, 12 glycans"/>
</dbReference>
<dbReference type="GlyGen" id="Q8IWA5">
    <property type="glycosylation" value="5 sites, 23 N-linked glycans (3 sites), 1 O-linked glycan (1 site)"/>
</dbReference>
<dbReference type="iPTMnet" id="Q8IWA5"/>
<dbReference type="PhosphoSitePlus" id="Q8IWA5"/>
<dbReference type="SwissPalm" id="Q8IWA5"/>
<dbReference type="BioMuta" id="SLC44A2"/>
<dbReference type="DMDM" id="311033462"/>
<dbReference type="jPOST" id="Q8IWA5"/>
<dbReference type="MassIVE" id="Q8IWA5"/>
<dbReference type="PaxDb" id="9606-ENSP00000336888"/>
<dbReference type="PeptideAtlas" id="Q8IWA5"/>
<dbReference type="ProteomicsDB" id="70829">
    <molecule id="Q8IWA5-1"/>
</dbReference>
<dbReference type="ProteomicsDB" id="70830">
    <molecule id="Q8IWA5-2"/>
</dbReference>
<dbReference type="ProteomicsDB" id="70831">
    <molecule id="Q8IWA5-3"/>
</dbReference>
<dbReference type="Pumba" id="Q8IWA5"/>
<dbReference type="Antibodypedia" id="1011">
    <property type="antibodies" value="138 antibodies from 25 providers"/>
</dbReference>
<dbReference type="DNASU" id="57153"/>
<dbReference type="Ensembl" id="ENST00000335757.10">
    <molecule id="Q8IWA5-1"/>
    <property type="protein sequence ID" value="ENSP00000336888.4"/>
    <property type="gene ID" value="ENSG00000129353.15"/>
</dbReference>
<dbReference type="Ensembl" id="ENST00000407327.8">
    <molecule id="Q8IWA5-3"/>
    <property type="protein sequence ID" value="ENSP00000385135.3"/>
    <property type="gene ID" value="ENSG00000129353.15"/>
</dbReference>
<dbReference type="Ensembl" id="ENST00000586078.5">
    <molecule id="Q8IWA5-2"/>
    <property type="protein sequence ID" value="ENSP00000466664.1"/>
    <property type="gene ID" value="ENSG00000129353.15"/>
</dbReference>
<dbReference type="GeneID" id="57153"/>
<dbReference type="KEGG" id="hsa:57153"/>
<dbReference type="MANE-Select" id="ENST00000335757.10">
    <property type="protein sequence ID" value="ENSP00000336888.4"/>
    <property type="RefSeq nucleotide sequence ID" value="NM_020428.4"/>
    <property type="RefSeq protein sequence ID" value="NP_065161.3"/>
</dbReference>
<dbReference type="UCSC" id="uc002mpe.5">
    <molecule id="Q8IWA5-1"/>
    <property type="organism name" value="human"/>
</dbReference>
<dbReference type="AGR" id="HGNC:17292"/>
<dbReference type="CTD" id="57153"/>
<dbReference type="DisGeNET" id="57153"/>
<dbReference type="GeneCards" id="SLC44A2"/>
<dbReference type="HGNC" id="HGNC:17292">
    <property type="gene designation" value="SLC44A2"/>
</dbReference>
<dbReference type="HPA" id="ENSG00000129353">
    <property type="expression patterns" value="Low tissue specificity"/>
</dbReference>
<dbReference type="MalaCards" id="SLC44A2"/>
<dbReference type="MIM" id="606106">
    <property type="type" value="gene"/>
</dbReference>
<dbReference type="neXtProt" id="NX_Q8IWA5"/>
<dbReference type="OpenTargets" id="ENSG00000129353"/>
<dbReference type="PharmGKB" id="PA142670899"/>
<dbReference type="VEuPathDB" id="HostDB:ENSG00000129353"/>
<dbReference type="eggNOG" id="KOG1362">
    <property type="taxonomic scope" value="Eukaryota"/>
</dbReference>
<dbReference type="GeneTree" id="ENSGT00940000158178"/>
<dbReference type="HOGENOM" id="CLU_017181_3_1_1"/>
<dbReference type="InParanoid" id="Q8IWA5"/>
<dbReference type="OMA" id="SQRKCRD"/>
<dbReference type="OrthoDB" id="420519at2759"/>
<dbReference type="PAN-GO" id="Q8IWA5">
    <property type="GO annotations" value="4 GO annotations based on evolutionary models"/>
</dbReference>
<dbReference type="PhylomeDB" id="Q8IWA5"/>
<dbReference type="TreeFam" id="TF313325"/>
<dbReference type="PathwayCommons" id="Q8IWA5"/>
<dbReference type="Reactome" id="R-HSA-1483191">
    <property type="pathway name" value="Synthesis of PC"/>
</dbReference>
<dbReference type="Reactome" id="R-HSA-425366">
    <property type="pathway name" value="Transport of bile salts and organic acids, metal ions and amine compounds"/>
</dbReference>
<dbReference type="Reactome" id="R-HSA-6798695">
    <property type="pathway name" value="Neutrophil degranulation"/>
</dbReference>
<dbReference type="SignaLink" id="Q8IWA5"/>
<dbReference type="SIGNOR" id="Q8IWA5"/>
<dbReference type="BioGRID-ORCS" id="57153">
    <property type="hits" value="10 hits in 1167 CRISPR screens"/>
</dbReference>
<dbReference type="ChiTaRS" id="SLC44A2">
    <property type="organism name" value="human"/>
</dbReference>
<dbReference type="GeneWiki" id="SLC44A2"/>
<dbReference type="GenomeRNAi" id="57153"/>
<dbReference type="Pharos" id="Q8IWA5">
    <property type="development level" value="Tbio"/>
</dbReference>
<dbReference type="PRO" id="PR:Q8IWA5"/>
<dbReference type="Proteomes" id="UP000005640">
    <property type="component" value="Chromosome 19"/>
</dbReference>
<dbReference type="RNAct" id="Q8IWA5">
    <property type="molecule type" value="protein"/>
</dbReference>
<dbReference type="Bgee" id="ENSG00000129353">
    <property type="expression patterns" value="Expressed in tibial nerve and 184 other cell types or tissues"/>
</dbReference>
<dbReference type="ExpressionAtlas" id="Q8IWA5">
    <property type="expression patterns" value="baseline and differential"/>
</dbReference>
<dbReference type="GO" id="GO:0070062">
    <property type="term" value="C:extracellular exosome"/>
    <property type="evidence" value="ECO:0007005"/>
    <property type="project" value="UniProtKB"/>
</dbReference>
<dbReference type="GO" id="GO:0005765">
    <property type="term" value="C:lysosomal membrane"/>
    <property type="evidence" value="ECO:0007005"/>
    <property type="project" value="UniProtKB"/>
</dbReference>
<dbReference type="GO" id="GO:0016020">
    <property type="term" value="C:membrane"/>
    <property type="evidence" value="ECO:0000318"/>
    <property type="project" value="GO_Central"/>
</dbReference>
<dbReference type="GO" id="GO:0005741">
    <property type="term" value="C:mitochondrial outer membrane"/>
    <property type="evidence" value="ECO:0000314"/>
    <property type="project" value="UniProtKB"/>
</dbReference>
<dbReference type="GO" id="GO:0005739">
    <property type="term" value="C:mitochondrion"/>
    <property type="evidence" value="ECO:0000314"/>
    <property type="project" value="ARUK-UCL"/>
</dbReference>
<dbReference type="GO" id="GO:0005886">
    <property type="term" value="C:plasma membrane"/>
    <property type="evidence" value="ECO:0000314"/>
    <property type="project" value="UniProtKB"/>
</dbReference>
<dbReference type="GO" id="GO:0035579">
    <property type="term" value="C:specific granule membrane"/>
    <property type="evidence" value="ECO:0000304"/>
    <property type="project" value="Reactome"/>
</dbReference>
<dbReference type="GO" id="GO:0015297">
    <property type="term" value="F:antiporter activity"/>
    <property type="evidence" value="ECO:0007669"/>
    <property type="project" value="UniProtKB-KW"/>
</dbReference>
<dbReference type="GO" id="GO:0015220">
    <property type="term" value="F:choline transmembrane transporter activity"/>
    <property type="evidence" value="ECO:0000314"/>
    <property type="project" value="UniProtKB"/>
</dbReference>
<dbReference type="GO" id="GO:0034228">
    <property type="term" value="F:ethanolamine transmembrane transporter activity"/>
    <property type="evidence" value="ECO:0000314"/>
    <property type="project" value="UniProtKB"/>
</dbReference>
<dbReference type="GO" id="GO:0022857">
    <property type="term" value="F:transmembrane transporter activity"/>
    <property type="evidence" value="ECO:0000318"/>
    <property type="project" value="GO_Central"/>
</dbReference>
<dbReference type="GO" id="GO:0015871">
    <property type="term" value="P:choline transport"/>
    <property type="evidence" value="ECO:0000314"/>
    <property type="project" value="UniProtKB"/>
</dbReference>
<dbReference type="GO" id="GO:0034229">
    <property type="term" value="P:ethanolamine transport"/>
    <property type="evidence" value="ECO:0000314"/>
    <property type="project" value="UniProtKB"/>
</dbReference>
<dbReference type="GO" id="GO:0006656">
    <property type="term" value="P:phosphatidylcholine biosynthetic process"/>
    <property type="evidence" value="ECO:0000304"/>
    <property type="project" value="Reactome"/>
</dbReference>
<dbReference type="GO" id="GO:0043123">
    <property type="term" value="P:positive regulation of canonical NF-kappaB signal transduction"/>
    <property type="evidence" value="ECO:0007001"/>
    <property type="project" value="UniProtKB"/>
</dbReference>
<dbReference type="GO" id="GO:0055085">
    <property type="term" value="P:transmembrane transport"/>
    <property type="evidence" value="ECO:0000314"/>
    <property type="project" value="ARUK-UCL"/>
</dbReference>
<dbReference type="InterPro" id="IPR007603">
    <property type="entry name" value="Choline_transptr-like"/>
</dbReference>
<dbReference type="PANTHER" id="PTHR12385">
    <property type="entry name" value="CHOLINE TRANSPORTER-LIKE (SLC FAMILY 44)"/>
    <property type="match status" value="1"/>
</dbReference>
<dbReference type="PANTHER" id="PTHR12385:SF34">
    <property type="entry name" value="CHOLINE TRANSPORTER-LIKE PROTEIN 2"/>
    <property type="match status" value="1"/>
</dbReference>
<dbReference type="Pfam" id="PF04515">
    <property type="entry name" value="Choline_transpo"/>
    <property type="match status" value="1"/>
</dbReference>
<comment type="function">
    <molecule>Isoform 1</molecule>
    <text evidence="3 11 12 13">Choline/H+ antiporter, mainly in mitochodria (PubMed:10677542, PubMed:20665236, PubMed:23651124, PubMed:33789160). Also acts as a low-affinity ethanolamine/H+ antiporter, regulating the supply of extracellular ethanolamine (Etn) for the CDP-Etn pathway, redistribute intracellular Etn and balance the CDP-Cho and CDP-Etn arms of the Kennedy pathway (PubMed:33789160).</text>
</comment>
<comment type="function">
    <molecule>Isoform 3</molecule>
    <text evidence="3 11">Does not exhibit choline transporter activity.</text>
</comment>
<comment type="catalytic activity">
    <molecule>Isoform 1</molecule>
    <reaction evidence="3 11 12 13">
        <text>choline(out) + n H(+)(in) = choline(in) + n H(+)(out)</text>
        <dbReference type="Rhea" id="RHEA:75463"/>
        <dbReference type="ChEBI" id="CHEBI:15354"/>
        <dbReference type="ChEBI" id="CHEBI:15378"/>
    </reaction>
</comment>
<comment type="catalytic activity">
    <reaction evidence="13">
        <text>ethanolamine(out) + n H(+)(in) = ethanolamine(in) + n H(+)(out)</text>
        <dbReference type="Rhea" id="RHEA:75467"/>
        <dbReference type="ChEBI" id="CHEBI:15378"/>
        <dbReference type="ChEBI" id="CHEBI:57603"/>
    </reaction>
</comment>
<comment type="biophysicochemical properties">
    <kinetics>
        <Vmax evidence="13">20.6 nmol/min/mg enzyme</Vmax>
    </kinetics>
    <phDependence>
        <text evidence="13">Optimum pH is 8.5.</text>
    </phDependence>
</comment>
<comment type="subunit">
    <text evidence="7">Interacts with COCH.</text>
</comment>
<comment type="subcellular location">
    <subcellularLocation>
        <location evidence="19">Cell membrane</location>
        <topology evidence="2">Multi-pass membrane protein</topology>
    </subcellularLocation>
    <subcellularLocation>
        <location evidence="19">Mitochondrion outer membrane</location>
        <topology evidence="2">Multi-pass membrane protein</topology>
    </subcellularLocation>
    <text evidence="1">Mainly expressed in mitochondria.</text>
</comment>
<comment type="alternative products">
    <event type="alternative promoter"/>
    <event type="alternative splicing"/>
    <isoform>
        <id>Q8IWA5-1</id>
        <name>1</name>
        <name>CTL2a</name>
        <name>CTL2P2A</name>
        <sequence type="displayed"/>
    </isoform>
    <isoform>
        <id>Q8IWA5-2</id>
        <name>2</name>
        <name>CTL2b</name>
        <name>CTL2P2B</name>
        <sequence type="described" ref="VSP_015431"/>
    </isoform>
    <isoform>
        <id>Q8IWA5-3</id>
        <name>3</name>
        <name>CTL2P1</name>
        <sequence type="described" ref="VSP_041792"/>
    </isoform>
</comment>
<comment type="tissue specificity">
    <text evidence="5 11">Present in supporting cells of the inner ear (at protein level).</text>
</comment>
<comment type="tissue specificity">
    <molecule>Isoform 3</molecule>
    <text evidence="11">Expressed in inner ear vestibular tissue.</text>
</comment>
<comment type="miscellaneous">
    <molecule>Isoform 3</molecule>
    <text evidence="18">Produced by alternative promoter usage.</text>
</comment>
<comment type="similarity">
    <text evidence="18">Belongs to the CTL (choline transporter-like) family.</text>
</comment>
<comment type="sequence caution" evidence="18">
    <conflict type="erroneous initiation">
        <sequence resource="EMBL-CDS" id="BAC11662"/>
    </conflict>
    <text>Truncated N-terminus.</text>
</comment>
<proteinExistence type="evidence at protein level"/>
<protein>
    <recommendedName>
        <fullName evidence="18">Choline transporter-like protein 2</fullName>
    </recommendedName>
    <alternativeName>
        <fullName>Solute carrier family 44 member 2</fullName>
    </alternativeName>
</protein>
<organism>
    <name type="scientific">Homo sapiens</name>
    <name type="common">Human</name>
    <dbReference type="NCBI Taxonomy" id="9606"/>
    <lineage>
        <taxon>Eukaryota</taxon>
        <taxon>Metazoa</taxon>
        <taxon>Chordata</taxon>
        <taxon>Craniata</taxon>
        <taxon>Vertebrata</taxon>
        <taxon>Euteleostomi</taxon>
        <taxon>Mammalia</taxon>
        <taxon>Eutheria</taxon>
        <taxon>Euarchontoglires</taxon>
        <taxon>Primates</taxon>
        <taxon>Haplorrhini</taxon>
        <taxon>Catarrhini</taxon>
        <taxon>Hominidae</taxon>
        <taxon>Homo</taxon>
    </lineage>
</organism>
<reference key="1">
    <citation type="journal article" date="2000" name="Proc. Natl. Acad. Sci. U.S.A.">
        <title>An electric lobe suppressor for a yeast choline transport mutation belongs to a new family of transporter-like proteins.</title>
        <authorList>
            <person name="O'Regan S."/>
            <person name="Traiffort E."/>
            <person name="Ruat M."/>
            <person name="Cha N."/>
            <person name="Compaore D."/>
            <person name="Meunier F.-M."/>
        </authorList>
    </citation>
    <scope>NUCLEOTIDE SEQUENCE [GENOMIC DNA]</scope>
    <scope>ALTERNATIVE SPLICING (ISOFORM 1)</scope>
    <scope>FUNCTION</scope>
    <scope>VARIANT ARG-154</scope>
    <scope>TRANSPORTER ACTIVITY</scope>
</reference>
<reference key="2">
    <citation type="journal article" date="2004" name="J. Neurosci.">
        <title>Identification and characterization of choline transporter-like protein 2, an inner ear glycoprotein of 68 and 72 kDa that is the target of antibody-induced hearing loss.</title>
        <authorList>
            <person name="Nair T.S."/>
            <person name="Kozma K.E."/>
            <person name="Hoefling N.L."/>
            <person name="Kommareddi P.K."/>
            <person name="Ueda Y."/>
            <person name="Gong T.-W."/>
            <person name="Lomax M.I."/>
            <person name="Lansford C.D."/>
            <person name="Telian S.A."/>
            <person name="Satar B."/>
            <person name="Arts H.A."/>
            <person name="El-Kashlan H.K."/>
            <person name="Berryhill W.E."/>
            <person name="Raphael Y."/>
            <person name="Carey T.E."/>
        </authorList>
    </citation>
    <scope>NUCLEOTIDE SEQUENCE [MRNA] (ISOFORM 1)</scope>
    <scope>DISEASE</scope>
    <scope>TISSUE SPECIFICITY</scope>
    <scope>VARIANT ARG-154</scope>
    <source>
        <tissue>Epithelium</tissue>
        <tissue>Inner ear</tissue>
    </source>
</reference>
<reference key="3">
    <citation type="submission" date="2011-04" db="EMBL/GenBank/DDBJ databases">
        <title>Detection of HNA-3b antibodies in patient sera.</title>
        <authorList>
            <person name="Santoso S.S."/>
            <person name="Bayat B.B."/>
            <person name="Sachs U."/>
        </authorList>
    </citation>
    <scope>NUCLEOTIDE SEQUENCE [MRNA] (ISOFORM 1)</scope>
</reference>
<reference key="4">
    <citation type="journal article" date="2004" name="Nat. Genet.">
        <title>Complete sequencing and characterization of 21,243 full-length human cDNAs.</title>
        <authorList>
            <person name="Ota T."/>
            <person name="Suzuki Y."/>
            <person name="Nishikawa T."/>
            <person name="Otsuki T."/>
            <person name="Sugiyama T."/>
            <person name="Irie R."/>
            <person name="Wakamatsu A."/>
            <person name="Hayashi K."/>
            <person name="Sato H."/>
            <person name="Nagai K."/>
            <person name="Kimura K."/>
            <person name="Makita H."/>
            <person name="Sekine M."/>
            <person name="Obayashi M."/>
            <person name="Nishi T."/>
            <person name="Shibahara T."/>
            <person name="Tanaka T."/>
            <person name="Ishii S."/>
            <person name="Yamamoto J."/>
            <person name="Saito K."/>
            <person name="Kawai Y."/>
            <person name="Isono Y."/>
            <person name="Nakamura Y."/>
            <person name="Nagahari K."/>
            <person name="Murakami K."/>
            <person name="Yasuda T."/>
            <person name="Iwayanagi T."/>
            <person name="Wagatsuma M."/>
            <person name="Shiratori A."/>
            <person name="Sudo H."/>
            <person name="Hosoiri T."/>
            <person name="Kaku Y."/>
            <person name="Kodaira H."/>
            <person name="Kondo H."/>
            <person name="Sugawara M."/>
            <person name="Takahashi M."/>
            <person name="Kanda K."/>
            <person name="Yokoi T."/>
            <person name="Furuya T."/>
            <person name="Kikkawa E."/>
            <person name="Omura Y."/>
            <person name="Abe K."/>
            <person name="Kamihara K."/>
            <person name="Katsuta N."/>
            <person name="Sato K."/>
            <person name="Tanikawa M."/>
            <person name="Yamazaki M."/>
            <person name="Ninomiya K."/>
            <person name="Ishibashi T."/>
            <person name="Yamashita H."/>
            <person name="Murakawa K."/>
            <person name="Fujimori K."/>
            <person name="Tanai H."/>
            <person name="Kimata M."/>
            <person name="Watanabe M."/>
            <person name="Hiraoka S."/>
            <person name="Chiba Y."/>
            <person name="Ishida S."/>
            <person name="Ono Y."/>
            <person name="Takiguchi S."/>
            <person name="Watanabe S."/>
            <person name="Yosida M."/>
            <person name="Hotuta T."/>
            <person name="Kusano J."/>
            <person name="Kanehori K."/>
            <person name="Takahashi-Fujii A."/>
            <person name="Hara H."/>
            <person name="Tanase T.-O."/>
            <person name="Nomura Y."/>
            <person name="Togiya S."/>
            <person name="Komai F."/>
            <person name="Hara R."/>
            <person name="Takeuchi K."/>
            <person name="Arita M."/>
            <person name="Imose N."/>
            <person name="Musashino K."/>
            <person name="Yuuki H."/>
            <person name="Oshima A."/>
            <person name="Sasaki N."/>
            <person name="Aotsuka S."/>
            <person name="Yoshikawa Y."/>
            <person name="Matsunawa H."/>
            <person name="Ichihara T."/>
            <person name="Shiohata N."/>
            <person name="Sano S."/>
            <person name="Moriya S."/>
            <person name="Momiyama H."/>
            <person name="Satoh N."/>
            <person name="Takami S."/>
            <person name="Terashima Y."/>
            <person name="Suzuki O."/>
            <person name="Nakagawa S."/>
            <person name="Senoh A."/>
            <person name="Mizoguchi H."/>
            <person name="Goto Y."/>
            <person name="Shimizu F."/>
            <person name="Wakebe H."/>
            <person name="Hishigaki H."/>
            <person name="Watanabe T."/>
            <person name="Sugiyama A."/>
            <person name="Takemoto M."/>
            <person name="Kawakami B."/>
            <person name="Yamazaki M."/>
            <person name="Watanabe K."/>
            <person name="Kumagai A."/>
            <person name="Itakura S."/>
            <person name="Fukuzumi Y."/>
            <person name="Fujimori Y."/>
            <person name="Komiyama M."/>
            <person name="Tashiro H."/>
            <person name="Tanigami A."/>
            <person name="Fujiwara T."/>
            <person name="Ono T."/>
            <person name="Yamada K."/>
            <person name="Fujii Y."/>
            <person name="Ozaki K."/>
            <person name="Hirao M."/>
            <person name="Ohmori Y."/>
            <person name="Kawabata A."/>
            <person name="Hikiji T."/>
            <person name="Kobatake N."/>
            <person name="Inagaki H."/>
            <person name="Ikema Y."/>
            <person name="Okamoto S."/>
            <person name="Okitani R."/>
            <person name="Kawakami T."/>
            <person name="Noguchi S."/>
            <person name="Itoh T."/>
            <person name="Shigeta K."/>
            <person name="Senba T."/>
            <person name="Matsumura K."/>
            <person name="Nakajima Y."/>
            <person name="Mizuno T."/>
            <person name="Morinaga M."/>
            <person name="Sasaki M."/>
            <person name="Togashi T."/>
            <person name="Oyama M."/>
            <person name="Hata H."/>
            <person name="Watanabe M."/>
            <person name="Komatsu T."/>
            <person name="Mizushima-Sugano J."/>
            <person name="Satoh T."/>
            <person name="Shirai Y."/>
            <person name="Takahashi Y."/>
            <person name="Nakagawa K."/>
            <person name="Okumura K."/>
            <person name="Nagase T."/>
            <person name="Nomura N."/>
            <person name="Kikuchi H."/>
            <person name="Masuho Y."/>
            <person name="Yamashita R."/>
            <person name="Nakai K."/>
            <person name="Yada T."/>
            <person name="Nakamura Y."/>
            <person name="Ohara O."/>
            <person name="Isogai T."/>
            <person name="Sugano S."/>
        </authorList>
    </citation>
    <scope>NUCLEOTIDE SEQUENCE [LARGE SCALE MRNA] (ISOFORMS 1 AND 3)</scope>
    <scope>NUCLEOTIDE SEQUENCE [LARGE SCALE MRNA] OF 565-706 (ISOFORM 2)</scope>
    <scope>VARIANT ARG-154</scope>
    <source>
        <tissue>Brain cortex</tissue>
        <tissue>Placenta</tissue>
        <tissue>Teratocarcinoma</tissue>
    </source>
</reference>
<reference key="5">
    <citation type="journal article" date="2004" name="Nature">
        <title>The DNA sequence and biology of human chromosome 19.</title>
        <authorList>
            <person name="Grimwood J."/>
            <person name="Gordon L.A."/>
            <person name="Olsen A.S."/>
            <person name="Terry A."/>
            <person name="Schmutz J."/>
            <person name="Lamerdin J.E."/>
            <person name="Hellsten U."/>
            <person name="Goodstein D."/>
            <person name="Couronne O."/>
            <person name="Tran-Gyamfi M."/>
            <person name="Aerts A."/>
            <person name="Altherr M."/>
            <person name="Ashworth L."/>
            <person name="Bajorek E."/>
            <person name="Black S."/>
            <person name="Branscomb E."/>
            <person name="Caenepeel S."/>
            <person name="Carrano A.V."/>
            <person name="Caoile C."/>
            <person name="Chan Y.M."/>
            <person name="Christensen M."/>
            <person name="Cleland C.A."/>
            <person name="Copeland A."/>
            <person name="Dalin E."/>
            <person name="Dehal P."/>
            <person name="Denys M."/>
            <person name="Detter J.C."/>
            <person name="Escobar J."/>
            <person name="Flowers D."/>
            <person name="Fotopulos D."/>
            <person name="Garcia C."/>
            <person name="Georgescu A.M."/>
            <person name="Glavina T."/>
            <person name="Gomez M."/>
            <person name="Gonzales E."/>
            <person name="Groza M."/>
            <person name="Hammon N."/>
            <person name="Hawkins T."/>
            <person name="Haydu L."/>
            <person name="Ho I."/>
            <person name="Huang W."/>
            <person name="Israni S."/>
            <person name="Jett J."/>
            <person name="Kadner K."/>
            <person name="Kimball H."/>
            <person name="Kobayashi A."/>
            <person name="Larionov V."/>
            <person name="Leem S.-H."/>
            <person name="Lopez F."/>
            <person name="Lou Y."/>
            <person name="Lowry S."/>
            <person name="Malfatti S."/>
            <person name="Martinez D."/>
            <person name="McCready P.M."/>
            <person name="Medina C."/>
            <person name="Morgan J."/>
            <person name="Nelson K."/>
            <person name="Nolan M."/>
            <person name="Ovcharenko I."/>
            <person name="Pitluck S."/>
            <person name="Pollard M."/>
            <person name="Popkie A.P."/>
            <person name="Predki P."/>
            <person name="Quan G."/>
            <person name="Ramirez L."/>
            <person name="Rash S."/>
            <person name="Retterer J."/>
            <person name="Rodriguez A."/>
            <person name="Rogers S."/>
            <person name="Salamov A."/>
            <person name="Salazar A."/>
            <person name="She X."/>
            <person name="Smith D."/>
            <person name="Slezak T."/>
            <person name="Solovyev V."/>
            <person name="Thayer N."/>
            <person name="Tice H."/>
            <person name="Tsai M."/>
            <person name="Ustaszewska A."/>
            <person name="Vo N."/>
            <person name="Wagner M."/>
            <person name="Wheeler J."/>
            <person name="Wu K."/>
            <person name="Xie G."/>
            <person name="Yang J."/>
            <person name="Dubchak I."/>
            <person name="Furey T.S."/>
            <person name="DeJong P."/>
            <person name="Dickson M."/>
            <person name="Gordon D."/>
            <person name="Eichler E.E."/>
            <person name="Pennacchio L.A."/>
            <person name="Richardson P."/>
            <person name="Stubbs L."/>
            <person name="Rokhsar D.S."/>
            <person name="Myers R.M."/>
            <person name="Rubin E.M."/>
            <person name="Lucas S.M."/>
        </authorList>
    </citation>
    <scope>NUCLEOTIDE SEQUENCE [LARGE SCALE GENOMIC DNA]</scope>
</reference>
<reference key="6">
    <citation type="submission" date="2005-07" db="EMBL/GenBank/DDBJ databases">
        <authorList>
            <person name="Mural R.J."/>
            <person name="Istrail S."/>
            <person name="Sutton G.G."/>
            <person name="Florea L."/>
            <person name="Halpern A.L."/>
            <person name="Mobarry C.M."/>
            <person name="Lippert R."/>
            <person name="Walenz B."/>
            <person name="Shatkay H."/>
            <person name="Dew I."/>
            <person name="Miller J.R."/>
            <person name="Flanigan M.J."/>
            <person name="Edwards N.J."/>
            <person name="Bolanos R."/>
            <person name="Fasulo D."/>
            <person name="Halldorsson B.V."/>
            <person name="Hannenhalli S."/>
            <person name="Turner R."/>
            <person name="Yooseph S."/>
            <person name="Lu F."/>
            <person name="Nusskern D.R."/>
            <person name="Shue B.C."/>
            <person name="Zheng X.H."/>
            <person name="Zhong F."/>
            <person name="Delcher A.L."/>
            <person name="Huson D.H."/>
            <person name="Kravitz S.A."/>
            <person name="Mouchard L."/>
            <person name="Reinert K."/>
            <person name="Remington K.A."/>
            <person name="Clark A.G."/>
            <person name="Waterman M.S."/>
            <person name="Eichler E.E."/>
            <person name="Adams M.D."/>
            <person name="Hunkapiller M.W."/>
            <person name="Myers E.W."/>
            <person name="Venter J.C."/>
        </authorList>
    </citation>
    <scope>NUCLEOTIDE SEQUENCE [LARGE SCALE GENOMIC DNA]</scope>
    <scope>VARIANT ARG-154</scope>
</reference>
<reference key="7">
    <citation type="journal article" date="2004" name="Genome Res.">
        <title>The status, quality, and expansion of the NIH full-length cDNA project: the Mammalian Gene Collection (MGC).</title>
        <authorList>
            <consortium name="The MGC Project Team"/>
        </authorList>
    </citation>
    <scope>NUCLEOTIDE SEQUENCE [LARGE SCALE MRNA] (ISOFORM 1)</scope>
    <scope>VARIANT ARG-154</scope>
    <source>
        <tissue>Eye</tissue>
        <tissue>Testis</tissue>
    </source>
</reference>
<reference key="8">
    <citation type="journal article" date="2007" name="BMC Genomics">
        <title>The full-ORF clone resource of the German cDNA consortium.</title>
        <authorList>
            <person name="Bechtel S."/>
            <person name="Rosenfelder H."/>
            <person name="Duda A."/>
            <person name="Schmidt C.P."/>
            <person name="Ernst U."/>
            <person name="Wellenreuther R."/>
            <person name="Mehrle A."/>
            <person name="Schuster C."/>
            <person name="Bahr A."/>
            <person name="Bloecker H."/>
            <person name="Heubner D."/>
            <person name="Hoerlein A."/>
            <person name="Michel G."/>
            <person name="Wedler H."/>
            <person name="Koehrer K."/>
            <person name="Ottenwaelder B."/>
            <person name="Poustka A."/>
            <person name="Wiemann S."/>
            <person name="Schupp I."/>
        </authorList>
    </citation>
    <scope>NUCLEOTIDE SEQUENCE [LARGE SCALE MRNA] OF 60-706 (ISOFORM 1)</scope>
    <scope>NUCLEOTIDE SEQUENCE [LARGE SCALE MRNA] OF 273-706 (ISOFORM 2)</scope>
    <scope>VARIANT ARG-154</scope>
    <source>
        <tissue>Stomach</tissue>
    </source>
</reference>
<reference key="9">
    <citation type="journal article" date="2005" name="DNA Res.">
        <title>Signal sequence and keyword trap in silico for selection of full-length human cDNAs encoding secretion or membrane proteins from oligo-capped cDNA libraries.</title>
        <authorList>
            <person name="Otsuki T."/>
            <person name="Ota T."/>
            <person name="Nishikawa T."/>
            <person name="Hayashi K."/>
            <person name="Suzuki Y."/>
            <person name="Yamamoto J."/>
            <person name="Wakamatsu A."/>
            <person name="Kimura K."/>
            <person name="Sakamoto K."/>
            <person name="Hatano N."/>
            <person name="Kawai Y."/>
            <person name="Ishii S."/>
            <person name="Saito K."/>
            <person name="Kojima S."/>
            <person name="Sugiyama T."/>
            <person name="Ono T."/>
            <person name="Okano K."/>
            <person name="Yoshikawa Y."/>
            <person name="Aotsuka S."/>
            <person name="Sasaki N."/>
            <person name="Hattori A."/>
            <person name="Okumura K."/>
            <person name="Nagai K."/>
            <person name="Sugano S."/>
            <person name="Isogai T."/>
        </authorList>
    </citation>
    <scope>NUCLEOTIDE SEQUENCE [LARGE SCALE MRNA] OF 321-706 (ISOFORM 1)</scope>
    <source>
        <tissue>Embryo</tissue>
    </source>
</reference>
<reference key="10">
    <citation type="submission" date="1998-06" db="EMBL/GenBank/DDBJ databases">
        <authorList>
            <person name="Yu W."/>
            <person name="Gibbs R.A."/>
        </authorList>
    </citation>
    <scope>NUCLEOTIDE SEQUENCE [LARGE SCALE MRNA] OF 663-706 (ISOFORM 3)</scope>
</reference>
<reference key="11">
    <citation type="journal article" date="2007" name="J. Assoc. Res. Otolaryngol.">
        <title>Cochlin isoforms and their interaction with CTL2 (SLC44A2) in the inner ear.</title>
        <authorList>
            <person name="Kommareddi P.K."/>
            <person name="Nair T.S."/>
            <person name="Raphael Y."/>
            <person name="Telian S.A."/>
            <person name="Kim A.H."/>
            <person name="Arts H.A."/>
            <person name="El-Kashlan H.K."/>
            <person name="Carey T.E."/>
        </authorList>
    </citation>
    <scope>INTERACTION WITH COCH</scope>
</reference>
<reference key="12">
    <citation type="journal article" date="2009" name="J. Proteome Res.">
        <title>Glycoproteomics analysis of human liver tissue by combination of multiple enzyme digestion and hydrazide chemistry.</title>
        <authorList>
            <person name="Chen R."/>
            <person name="Jiang X."/>
            <person name="Sun D."/>
            <person name="Han G."/>
            <person name="Wang F."/>
            <person name="Ye M."/>
            <person name="Wang L."/>
            <person name="Zou H."/>
        </authorList>
    </citation>
    <scope>GLYCOSYLATION [LARGE SCALE ANALYSIS] AT ASN-187 AND ASN-200</scope>
    <source>
        <tissue>Liver</tissue>
    </source>
</reference>
<reference key="13">
    <citation type="journal article" date="2009" name="Nat. Biotechnol.">
        <title>Mass-spectrometric identification and relative quantification of N-linked cell surface glycoproteins.</title>
        <authorList>
            <person name="Wollscheid B."/>
            <person name="Bausch-Fluck D."/>
            <person name="Henderson C."/>
            <person name="O'Brien R."/>
            <person name="Bibel M."/>
            <person name="Schiess R."/>
            <person name="Aebersold R."/>
            <person name="Watts J.D."/>
        </authorList>
    </citation>
    <scope>GLYCOSYLATION [LARGE SCALE ANALYSIS] AT ASN-187 AND ASN-200</scope>
    <source>
        <tissue>Leukemic T-cell</tissue>
    </source>
</reference>
<reference key="14">
    <citation type="journal article" date="2010" name="Protein J.">
        <title>Isoforms, expression, glycosylation, and tissue distribution of CTL2/SLC44A2.</title>
        <authorList>
            <person name="Kommareddi P.K."/>
            <person name="Nair T.S."/>
            <person name="Thang L.V."/>
            <person name="Galano M.M."/>
            <person name="Babu E."/>
            <person name="Ganapathy V."/>
            <person name="Kanazawa T."/>
            <person name="McHugh J.B."/>
            <person name="Carey T.E."/>
        </authorList>
    </citation>
    <scope>FUNCTION</scope>
    <scope>ALTERNATIVE PROMOTER USAGE</scope>
    <scope>TISSUE SPECIFICITY</scope>
    <scope>TRANSPORTER ACTIVITY</scope>
</reference>
<reference key="15">
    <citation type="journal article" date="2013" name="J. Neurochem.">
        <title>Choline transporter-like protein 4 (CTL4) links to non-neuronal acetylcholine synthesis.</title>
        <authorList>
            <person name="Song P."/>
            <person name="Rekow S.S."/>
            <person name="Singleton C.A."/>
            <person name="Sekhon H.S."/>
            <person name="Dissen G.A."/>
            <person name="Zhou M."/>
            <person name="Campling B."/>
            <person name="Lindstrom J."/>
            <person name="Spindel E.R."/>
        </authorList>
    </citation>
    <scope>FUNCTION</scope>
    <scope>TRANSPORTER ACTIVITY</scope>
</reference>
<reference key="16">
    <citation type="journal article" date="2013" name="J. Proteome Res.">
        <title>Toward a comprehensive characterization of a human cancer cell phosphoproteome.</title>
        <authorList>
            <person name="Zhou H."/>
            <person name="Di Palma S."/>
            <person name="Preisinger C."/>
            <person name="Peng M."/>
            <person name="Polat A.N."/>
            <person name="Heck A.J."/>
            <person name="Mohammed S."/>
        </authorList>
    </citation>
    <scope>PHOSPHORYLATION [LARGE SCALE ANALYSIS] AT THR-14</scope>
    <scope>IDENTIFICATION BY MASS SPECTROMETRY [LARGE SCALE ANALYSIS]</scope>
    <source>
        <tissue>Cervix carcinoma</tissue>
    </source>
</reference>
<reference key="17">
    <citation type="journal article" date="2015" name="Proteomics">
        <title>N-terminome analysis of the human mitochondrial proteome.</title>
        <authorList>
            <person name="Vaca Jacome A.S."/>
            <person name="Rabilloud T."/>
            <person name="Schaeffer-Reiss C."/>
            <person name="Rompais M."/>
            <person name="Ayoub D."/>
            <person name="Lane L."/>
            <person name="Bairoch A."/>
            <person name="Van Dorsselaer A."/>
            <person name="Carapito C."/>
        </authorList>
    </citation>
    <scope>IDENTIFICATION BY MASS SPECTROMETRY [LARGE SCALE ANALYSIS]</scope>
</reference>
<reference key="18">
    <citation type="journal article" date="2021" name="J. Biol. Chem.">
        <title>Choline transporter-like proteins 1 and 2 are newly identified plasma membrane and mitochondrial ethanolamine transporters.</title>
        <authorList>
            <person name="Taylor A."/>
            <person name="Grapentine S."/>
            <person name="Ichhpuniani J."/>
            <person name="Bakovic M."/>
        </authorList>
    </citation>
    <scope>FUNCTION</scope>
    <scope>TRANSPORTER ACTIVITY</scope>
    <scope>BIOPHYSICOCHEMICAL PROPERTIES</scope>
    <scope>SUBCELLULAR LOCATION</scope>
</reference>
<accession>Q8IWA5</accession>
<accession>B2RBB1</accession>
<accession>B3KNH3</accession>
<accession>B4DFJ0</accession>
<accession>F2Q9D7</accession>
<accession>Q658V1</accession>
<accession>Q658Z2</accession>
<accession>Q6PJV7</accession>
<accession>Q8N2F0</accession>
<accession>Q9NY68</accession>
<keyword id="KW-0877">Alternative promoter usage</keyword>
<keyword id="KW-0025">Alternative splicing</keyword>
<keyword id="KW-0050">Antiport</keyword>
<keyword id="KW-1003">Cell membrane</keyword>
<keyword id="KW-0325">Glycoprotein</keyword>
<keyword id="KW-0472">Membrane</keyword>
<keyword id="KW-0496">Mitochondrion</keyword>
<keyword id="KW-1000">Mitochondrion outer membrane</keyword>
<keyword id="KW-0597">Phosphoprotein</keyword>
<keyword id="KW-1267">Proteomics identification</keyword>
<keyword id="KW-1185">Reference proteome</keyword>
<keyword id="KW-0812">Transmembrane</keyword>
<keyword id="KW-1133">Transmembrane helix</keyword>
<keyword id="KW-0813">Transport</keyword>
<gene>
    <name evidence="20" type="primary">SLC44A2</name>
    <name type="synonym">CTL2</name>
    <name type="ORF">PSEC0210</name>
</gene>
<sequence length="706" mass="80124">MGDERPHYYGKHGTPQKYDPTFKGPIYNRGCTDIICCVFLLLAIVGYVAVGIIAWTHGDPRKVIYPTDSRGEFCGQKGTKNENKPYLFYFNIVKCASPLVLLEFQCPTPQICVEKCPDRYLTYLNARSSRDFEYYKQFCVPGFKNNKGVAEVLQDGDCPAVLIPSKPLARRCFPAIHAYKGVLMVGNETTYEDGHGSRKNITDLVEGAKKANGVLEARQLAMRIFEDYTVSWYWIIIGLVIAMAMSLLFIILLRFLAGIMVWVMIIMVILVLGYGIFHCYMEYSRLRGEAGSDVSLVDLGFQTDFRVYLHLRQTWLAFMIILSILEVIIILLLIFLRKRILIAIALIKEASRAVGYVMCSLLYPLVTFFLLCLCIAYWASTAVFLSTSNEAVYKIFDDSPCPFTAKTCNPETFPSSNESRQCPNARCQFAFYGGESGYHRALLGLQIFNAFMFFWLANFVLALGQVTLAGAFASYYWALRKPDDLPAFPLFSAFGRALRYHTGSLAFGALILAIVQIIRVILEYLDQRLKAAENKFAKCLMTCLKCCFWCLEKFIKFLNRNAYIMIAIYGTNFCTSARNAFFLLMRNIIRVAVLDKVTDFLFLLGKLLIVGSVGILAFFFFTHRIRIVQDTAPPLNYYWVPILTVIVGSYLIAHGFFSVYGMCVDTLFLCFLEDLERNDGSAERPYFMSSTLKKLLNKTNKKAAES</sequence>
<name>CTL2_HUMAN</name>
<feature type="chain" id="PRO_0000191717" description="Choline transporter-like protein 2">
    <location>
        <begin position="1"/>
        <end position="706"/>
    </location>
</feature>
<feature type="topological domain" description="Cytoplasmic" evidence="2">
    <location>
        <begin position="1"/>
        <end position="33"/>
    </location>
</feature>
<feature type="transmembrane region" description="Helical" evidence="2">
    <location>
        <begin position="34"/>
        <end position="54"/>
    </location>
</feature>
<feature type="topological domain" description="Extracellular" evidence="2">
    <location>
        <begin position="55"/>
        <end position="232"/>
    </location>
</feature>
<feature type="transmembrane region" description="Helical" evidence="2">
    <location>
        <begin position="233"/>
        <end position="253"/>
    </location>
</feature>
<feature type="topological domain" description="Cytoplasmic" evidence="2">
    <location>
        <begin position="254"/>
        <end position="256"/>
    </location>
</feature>
<feature type="transmembrane region" description="Helical" evidence="2">
    <location>
        <begin position="257"/>
        <end position="277"/>
    </location>
</feature>
<feature type="topological domain" description="Extracellular" evidence="2">
    <location>
        <begin position="278"/>
        <end position="315"/>
    </location>
</feature>
<feature type="transmembrane region" description="Helical" evidence="2">
    <location>
        <begin position="316"/>
        <end position="336"/>
    </location>
</feature>
<feature type="topological domain" description="Cytoplasmic" evidence="2">
    <location>
        <begin position="337"/>
        <end position="364"/>
    </location>
</feature>
<feature type="transmembrane region" description="Helical" evidence="2">
    <location>
        <begin position="365"/>
        <end position="385"/>
    </location>
</feature>
<feature type="topological domain" description="Extracellular" evidence="2">
    <location>
        <begin position="386"/>
        <end position="457"/>
    </location>
</feature>
<feature type="transmembrane region" description="Helical" evidence="2">
    <location>
        <begin position="458"/>
        <end position="480"/>
    </location>
</feature>
<feature type="topological domain" description="Cytoplasmic" evidence="2">
    <location>
        <begin position="481"/>
        <end position="504"/>
    </location>
</feature>
<feature type="transmembrane region" description="Helical" evidence="2">
    <location>
        <begin position="505"/>
        <end position="525"/>
    </location>
</feature>
<feature type="topological domain" description="Extracellular" evidence="2">
    <location>
        <begin position="526"/>
        <end position="563"/>
    </location>
</feature>
<feature type="transmembrane region" description="Helical" evidence="2">
    <location>
        <begin position="564"/>
        <end position="584"/>
    </location>
</feature>
<feature type="topological domain" description="Cytoplasmic" evidence="2">
    <location>
        <begin position="585"/>
        <end position="599"/>
    </location>
</feature>
<feature type="transmembrane region" description="Helical" evidence="2">
    <location>
        <begin position="600"/>
        <end position="620"/>
    </location>
</feature>
<feature type="topological domain" description="Extracellular" evidence="2">
    <location>
        <begin position="621"/>
        <end position="638"/>
    </location>
</feature>
<feature type="transmembrane region" description="Helical" evidence="2">
    <location>
        <begin position="639"/>
        <end position="659"/>
    </location>
</feature>
<feature type="topological domain" description="Cytoplasmic" evidence="2">
    <location>
        <begin position="660"/>
        <end position="706"/>
    </location>
</feature>
<feature type="modified residue" description="Phosphothreonine" evidence="21">
    <location>
        <position position="14"/>
    </location>
</feature>
<feature type="glycosylation site" description="N-linked (GlcNAc...) asparagine" evidence="9 10">
    <location>
        <position position="187"/>
    </location>
</feature>
<feature type="glycosylation site" description="N-linked (GlcNAc...) asparagine" evidence="9 10">
    <location>
        <position position="200"/>
    </location>
</feature>
<feature type="glycosylation site" description="N-linked (GlcNAc...) asparagine" evidence="2">
    <location>
        <position position="417"/>
    </location>
</feature>
<feature type="splice variant" id="VSP_041792" description="In isoform 3." evidence="15 17">
    <original>MGDERPHYYGKH</original>
    <variation>MEDERKNGAY</variation>
    <location>
        <begin position="1"/>
        <end position="12"/>
    </location>
</feature>
<feature type="splice variant" id="VSP_015431" description="In isoform 2." evidence="15 16">
    <original>LEDLERNDGSAERPYFMSSTLKKLLNKTNKKAAES</original>
    <variation>CEDLERNDGSQERPYFMSPELRDILLKGSAEEGKRAEAEE</variation>
    <location>
        <begin position="672"/>
        <end position="706"/>
    </location>
</feature>
<feature type="sequence variant" id="VAR_023404" description="In dbSNP:rs2288904." evidence="3 4 5 6 8 14">
    <original>Q</original>
    <variation>R</variation>
    <location>
        <position position="154"/>
    </location>
</feature>
<feature type="sequence conflict" description="In Ref. 4; BAG51335." evidence="18" ref="4">
    <original>I</original>
    <variation>T</variation>
    <location>
        <position position="92"/>
    </location>
</feature>
<feature type="sequence conflict" description="In Ref. 3; CBJ93592." evidence="18" ref="3">
    <original>L</original>
    <variation>F</variation>
    <location>
        <position position="153"/>
    </location>
</feature>
<feature type="sequence conflict" description="In Ref. 1; CAB75542." evidence="18" ref="1">
    <original>A</original>
    <variation>G</variation>
    <location>
        <position position="531"/>
    </location>
</feature>
<feature type="sequence conflict" description="In Ref. 7; AAH40556." evidence="18" ref="7">
    <original>L</original>
    <variation>P</variation>
    <location>
        <position position="695"/>
    </location>
</feature>